<dbReference type="EMBL" id="AM942759">
    <property type="protein sequence ID" value="CAR46021.1"/>
    <property type="molecule type" value="Genomic_DNA"/>
</dbReference>
<dbReference type="RefSeq" id="WP_004246591.1">
    <property type="nucleotide sequence ID" value="NC_010554.1"/>
</dbReference>
<dbReference type="SMR" id="B4F0E6"/>
<dbReference type="EnsemblBacteria" id="CAR46021">
    <property type="protein sequence ID" value="CAR46021"/>
    <property type="gene ID" value="PMI3063"/>
</dbReference>
<dbReference type="GeneID" id="6803474"/>
<dbReference type="KEGG" id="pmr:PMI3063"/>
<dbReference type="eggNOG" id="COG0224">
    <property type="taxonomic scope" value="Bacteria"/>
</dbReference>
<dbReference type="HOGENOM" id="CLU_050669_0_1_6"/>
<dbReference type="Proteomes" id="UP000008319">
    <property type="component" value="Chromosome"/>
</dbReference>
<dbReference type="GO" id="GO:0005886">
    <property type="term" value="C:plasma membrane"/>
    <property type="evidence" value="ECO:0007669"/>
    <property type="project" value="UniProtKB-SubCell"/>
</dbReference>
<dbReference type="GO" id="GO:0045259">
    <property type="term" value="C:proton-transporting ATP synthase complex"/>
    <property type="evidence" value="ECO:0007669"/>
    <property type="project" value="UniProtKB-KW"/>
</dbReference>
<dbReference type="GO" id="GO:0005524">
    <property type="term" value="F:ATP binding"/>
    <property type="evidence" value="ECO:0007669"/>
    <property type="project" value="UniProtKB-UniRule"/>
</dbReference>
<dbReference type="GO" id="GO:0046933">
    <property type="term" value="F:proton-transporting ATP synthase activity, rotational mechanism"/>
    <property type="evidence" value="ECO:0007669"/>
    <property type="project" value="UniProtKB-UniRule"/>
</dbReference>
<dbReference type="GO" id="GO:0042777">
    <property type="term" value="P:proton motive force-driven plasma membrane ATP synthesis"/>
    <property type="evidence" value="ECO:0007669"/>
    <property type="project" value="UniProtKB-UniRule"/>
</dbReference>
<dbReference type="CDD" id="cd12151">
    <property type="entry name" value="F1-ATPase_gamma"/>
    <property type="match status" value="1"/>
</dbReference>
<dbReference type="FunFam" id="1.10.287.80:FF:000005">
    <property type="entry name" value="ATP synthase gamma chain"/>
    <property type="match status" value="2"/>
</dbReference>
<dbReference type="FunFam" id="3.40.1380.10:FF:000001">
    <property type="entry name" value="ATP synthase gamma chain"/>
    <property type="match status" value="1"/>
</dbReference>
<dbReference type="Gene3D" id="3.40.1380.10">
    <property type="match status" value="1"/>
</dbReference>
<dbReference type="Gene3D" id="1.10.287.80">
    <property type="entry name" value="ATP synthase, gamma subunit, helix hairpin domain"/>
    <property type="match status" value="2"/>
</dbReference>
<dbReference type="HAMAP" id="MF_00815">
    <property type="entry name" value="ATP_synth_gamma_bact"/>
    <property type="match status" value="1"/>
</dbReference>
<dbReference type="InterPro" id="IPR035968">
    <property type="entry name" value="ATP_synth_F1_ATPase_gsu"/>
</dbReference>
<dbReference type="InterPro" id="IPR000131">
    <property type="entry name" value="ATP_synth_F1_gsu"/>
</dbReference>
<dbReference type="InterPro" id="IPR023632">
    <property type="entry name" value="ATP_synth_F1_gsu_CS"/>
</dbReference>
<dbReference type="NCBIfam" id="TIGR01146">
    <property type="entry name" value="ATPsyn_F1gamma"/>
    <property type="match status" value="1"/>
</dbReference>
<dbReference type="NCBIfam" id="NF004144">
    <property type="entry name" value="PRK05621.1-1"/>
    <property type="match status" value="1"/>
</dbReference>
<dbReference type="PANTHER" id="PTHR11693">
    <property type="entry name" value="ATP SYNTHASE GAMMA CHAIN"/>
    <property type="match status" value="1"/>
</dbReference>
<dbReference type="PANTHER" id="PTHR11693:SF22">
    <property type="entry name" value="ATP SYNTHASE SUBUNIT GAMMA, MITOCHONDRIAL"/>
    <property type="match status" value="1"/>
</dbReference>
<dbReference type="Pfam" id="PF00231">
    <property type="entry name" value="ATP-synt"/>
    <property type="match status" value="1"/>
</dbReference>
<dbReference type="PRINTS" id="PR00126">
    <property type="entry name" value="ATPASEGAMMA"/>
</dbReference>
<dbReference type="SUPFAM" id="SSF52943">
    <property type="entry name" value="ATP synthase (F1-ATPase), gamma subunit"/>
    <property type="match status" value="1"/>
</dbReference>
<dbReference type="PROSITE" id="PS00153">
    <property type="entry name" value="ATPASE_GAMMA"/>
    <property type="match status" value="1"/>
</dbReference>
<organism>
    <name type="scientific">Proteus mirabilis (strain HI4320)</name>
    <dbReference type="NCBI Taxonomy" id="529507"/>
    <lineage>
        <taxon>Bacteria</taxon>
        <taxon>Pseudomonadati</taxon>
        <taxon>Pseudomonadota</taxon>
        <taxon>Gammaproteobacteria</taxon>
        <taxon>Enterobacterales</taxon>
        <taxon>Morganellaceae</taxon>
        <taxon>Proteus</taxon>
    </lineage>
</organism>
<protein>
    <recommendedName>
        <fullName evidence="1">ATP synthase gamma chain</fullName>
    </recommendedName>
    <alternativeName>
        <fullName evidence="1">ATP synthase F1 sector gamma subunit</fullName>
    </alternativeName>
    <alternativeName>
        <fullName evidence="1">F-ATPase gamma subunit</fullName>
    </alternativeName>
</protein>
<keyword id="KW-0066">ATP synthesis</keyword>
<keyword id="KW-0997">Cell inner membrane</keyword>
<keyword id="KW-1003">Cell membrane</keyword>
<keyword id="KW-0139">CF(1)</keyword>
<keyword id="KW-0375">Hydrogen ion transport</keyword>
<keyword id="KW-0406">Ion transport</keyword>
<keyword id="KW-0472">Membrane</keyword>
<keyword id="KW-1185">Reference proteome</keyword>
<keyword id="KW-0813">Transport</keyword>
<gene>
    <name evidence="1" type="primary">atpG</name>
    <name type="ordered locus">PMI3063</name>
</gene>
<feature type="chain" id="PRO_1000134190" description="ATP synthase gamma chain">
    <location>
        <begin position="1"/>
        <end position="287"/>
    </location>
</feature>
<sequence length="287" mass="31658">MAGAKEIRSKIASVQNTQKITKAMEMVAASKMRKTQERMAASRPYAETMRSVIGHLALGNLEYKHPYLEEREVKRVGYLVVSTDRGLCGGLNINLFKKLLADMKEWSDKGVEVDLALVGSKAVSFFASVGGNVVGQVTGMGDDPQLSDLIGPVNIMLQAYDEGRLDKLYVVANKFINTMAQEPKILQVLPLPPGDDEELKEKSWDYLYEPDPKTLLDTLLRRYIESQVYQSVVENLASEQAARMVAMKAATDNGGNLIKELQLVYNKARQASITQELTEIVSGAAAV</sequence>
<reference key="1">
    <citation type="journal article" date="2008" name="J. Bacteriol.">
        <title>Complete genome sequence of uropathogenic Proteus mirabilis, a master of both adherence and motility.</title>
        <authorList>
            <person name="Pearson M.M."/>
            <person name="Sebaihia M."/>
            <person name="Churcher C."/>
            <person name="Quail M.A."/>
            <person name="Seshasayee A.S."/>
            <person name="Luscombe N.M."/>
            <person name="Abdellah Z."/>
            <person name="Arrosmith C."/>
            <person name="Atkin B."/>
            <person name="Chillingworth T."/>
            <person name="Hauser H."/>
            <person name="Jagels K."/>
            <person name="Moule S."/>
            <person name="Mungall K."/>
            <person name="Norbertczak H."/>
            <person name="Rabbinowitsch E."/>
            <person name="Walker D."/>
            <person name="Whithead S."/>
            <person name="Thomson N.R."/>
            <person name="Rather P.N."/>
            <person name="Parkhill J."/>
            <person name="Mobley H.L.T."/>
        </authorList>
    </citation>
    <scope>NUCLEOTIDE SEQUENCE [LARGE SCALE GENOMIC DNA]</scope>
    <source>
        <strain>HI4320</strain>
    </source>
</reference>
<name>ATPG_PROMH</name>
<accession>B4F0E6</accession>
<proteinExistence type="inferred from homology"/>
<evidence type="ECO:0000255" key="1">
    <source>
        <dbReference type="HAMAP-Rule" id="MF_00815"/>
    </source>
</evidence>
<comment type="function">
    <text evidence="1">Produces ATP from ADP in the presence of a proton gradient across the membrane. The gamma chain is believed to be important in regulating ATPase activity and the flow of protons through the CF(0) complex.</text>
</comment>
<comment type="subunit">
    <text evidence="1">F-type ATPases have 2 components, CF(1) - the catalytic core - and CF(0) - the membrane proton channel. CF(1) has five subunits: alpha(3), beta(3), gamma(1), delta(1), epsilon(1). CF(0) has three main subunits: a, b and c.</text>
</comment>
<comment type="subcellular location">
    <subcellularLocation>
        <location evidence="1">Cell inner membrane</location>
        <topology evidence="1">Peripheral membrane protein</topology>
    </subcellularLocation>
</comment>
<comment type="similarity">
    <text evidence="1">Belongs to the ATPase gamma chain family.</text>
</comment>